<proteinExistence type="inferred from homology"/>
<feature type="chain" id="PRO_0000374292" description="tRNA-2-methylthio-N(6)-dimethylallyladenosine synthase">
    <location>
        <begin position="1"/>
        <end position="474"/>
    </location>
</feature>
<feature type="domain" description="MTTase N-terminal" evidence="1">
    <location>
        <begin position="3"/>
        <end position="120"/>
    </location>
</feature>
<feature type="domain" description="Radical SAM core" evidence="2">
    <location>
        <begin position="143"/>
        <end position="375"/>
    </location>
</feature>
<feature type="domain" description="TRAM" evidence="1">
    <location>
        <begin position="378"/>
        <end position="441"/>
    </location>
</feature>
<feature type="binding site" evidence="1">
    <location>
        <position position="12"/>
    </location>
    <ligand>
        <name>[4Fe-4S] cluster</name>
        <dbReference type="ChEBI" id="CHEBI:49883"/>
        <label>1</label>
    </ligand>
</feature>
<feature type="binding site" evidence="1">
    <location>
        <position position="49"/>
    </location>
    <ligand>
        <name>[4Fe-4S] cluster</name>
        <dbReference type="ChEBI" id="CHEBI:49883"/>
        <label>1</label>
    </ligand>
</feature>
<feature type="binding site" evidence="1">
    <location>
        <position position="83"/>
    </location>
    <ligand>
        <name>[4Fe-4S] cluster</name>
        <dbReference type="ChEBI" id="CHEBI:49883"/>
        <label>1</label>
    </ligand>
</feature>
<feature type="binding site" evidence="1">
    <location>
        <position position="157"/>
    </location>
    <ligand>
        <name>[4Fe-4S] cluster</name>
        <dbReference type="ChEBI" id="CHEBI:49883"/>
        <label>2</label>
        <note>4Fe-4S-S-AdoMet</note>
    </ligand>
</feature>
<feature type="binding site" evidence="1">
    <location>
        <position position="161"/>
    </location>
    <ligand>
        <name>[4Fe-4S] cluster</name>
        <dbReference type="ChEBI" id="CHEBI:49883"/>
        <label>2</label>
        <note>4Fe-4S-S-AdoMet</note>
    </ligand>
</feature>
<feature type="binding site" evidence="1">
    <location>
        <position position="164"/>
    </location>
    <ligand>
        <name>[4Fe-4S] cluster</name>
        <dbReference type="ChEBI" id="CHEBI:49883"/>
        <label>2</label>
        <note>4Fe-4S-S-AdoMet</note>
    </ligand>
</feature>
<comment type="function">
    <text evidence="1">Catalyzes the methylthiolation of N6-(dimethylallyl)adenosine (i(6)A), leading to the formation of 2-methylthio-N6-(dimethylallyl)adenosine (ms(2)i(6)A) at position 37 in tRNAs that read codons beginning with uridine.</text>
</comment>
<comment type="catalytic activity">
    <reaction evidence="1">
        <text>N(6)-dimethylallyladenosine(37) in tRNA + (sulfur carrier)-SH + AH2 + 2 S-adenosyl-L-methionine = 2-methylsulfanyl-N(6)-dimethylallyladenosine(37) in tRNA + (sulfur carrier)-H + 5'-deoxyadenosine + L-methionine + A + S-adenosyl-L-homocysteine + 2 H(+)</text>
        <dbReference type="Rhea" id="RHEA:37067"/>
        <dbReference type="Rhea" id="RHEA-COMP:10375"/>
        <dbReference type="Rhea" id="RHEA-COMP:10376"/>
        <dbReference type="Rhea" id="RHEA-COMP:14737"/>
        <dbReference type="Rhea" id="RHEA-COMP:14739"/>
        <dbReference type="ChEBI" id="CHEBI:13193"/>
        <dbReference type="ChEBI" id="CHEBI:15378"/>
        <dbReference type="ChEBI" id="CHEBI:17319"/>
        <dbReference type="ChEBI" id="CHEBI:17499"/>
        <dbReference type="ChEBI" id="CHEBI:29917"/>
        <dbReference type="ChEBI" id="CHEBI:57844"/>
        <dbReference type="ChEBI" id="CHEBI:57856"/>
        <dbReference type="ChEBI" id="CHEBI:59789"/>
        <dbReference type="ChEBI" id="CHEBI:64428"/>
        <dbReference type="ChEBI" id="CHEBI:74415"/>
        <dbReference type="ChEBI" id="CHEBI:74417"/>
        <dbReference type="EC" id="2.8.4.3"/>
    </reaction>
</comment>
<comment type="cofactor">
    <cofactor evidence="1">
        <name>[4Fe-4S] cluster</name>
        <dbReference type="ChEBI" id="CHEBI:49883"/>
    </cofactor>
    <text evidence="1">Binds 2 [4Fe-4S] clusters. One cluster is coordinated with 3 cysteines and an exchangeable S-adenosyl-L-methionine.</text>
</comment>
<comment type="subunit">
    <text evidence="1">Monomer.</text>
</comment>
<comment type="subcellular location">
    <subcellularLocation>
        <location evidence="1">Cytoplasm</location>
    </subcellularLocation>
</comment>
<comment type="similarity">
    <text evidence="1">Belongs to the methylthiotransferase family. MiaB subfamily.</text>
</comment>
<keyword id="KW-0004">4Fe-4S</keyword>
<keyword id="KW-0963">Cytoplasm</keyword>
<keyword id="KW-0408">Iron</keyword>
<keyword id="KW-0411">Iron-sulfur</keyword>
<keyword id="KW-0479">Metal-binding</keyword>
<keyword id="KW-0949">S-adenosyl-L-methionine</keyword>
<keyword id="KW-0808">Transferase</keyword>
<keyword id="KW-0819">tRNA processing</keyword>
<dbReference type="EC" id="2.8.4.3" evidence="1"/>
<dbReference type="EMBL" id="CP000247">
    <property type="protein sequence ID" value="ABG68712.1"/>
    <property type="molecule type" value="Genomic_DNA"/>
</dbReference>
<dbReference type="RefSeq" id="WP_000162740.1">
    <property type="nucleotide sequence ID" value="NC_008253.1"/>
</dbReference>
<dbReference type="SMR" id="Q0TK19"/>
<dbReference type="GeneID" id="86863171"/>
<dbReference type="KEGG" id="ecp:ECP_0684"/>
<dbReference type="HOGENOM" id="CLU_018697_2_0_6"/>
<dbReference type="Proteomes" id="UP000009182">
    <property type="component" value="Chromosome"/>
</dbReference>
<dbReference type="GO" id="GO:0005829">
    <property type="term" value="C:cytosol"/>
    <property type="evidence" value="ECO:0007669"/>
    <property type="project" value="TreeGrafter"/>
</dbReference>
<dbReference type="GO" id="GO:0051539">
    <property type="term" value="F:4 iron, 4 sulfur cluster binding"/>
    <property type="evidence" value="ECO:0007669"/>
    <property type="project" value="UniProtKB-UniRule"/>
</dbReference>
<dbReference type="GO" id="GO:0046872">
    <property type="term" value="F:metal ion binding"/>
    <property type="evidence" value="ECO:0007669"/>
    <property type="project" value="UniProtKB-KW"/>
</dbReference>
<dbReference type="GO" id="GO:0035597">
    <property type="term" value="F:N6-isopentenyladenosine methylthiotransferase activity"/>
    <property type="evidence" value="ECO:0007669"/>
    <property type="project" value="TreeGrafter"/>
</dbReference>
<dbReference type="CDD" id="cd01335">
    <property type="entry name" value="Radical_SAM"/>
    <property type="match status" value="1"/>
</dbReference>
<dbReference type="FunFam" id="3.40.50.12160:FF:000001">
    <property type="entry name" value="tRNA-2-methylthio-N(6)-dimethylallyladenosine synthase"/>
    <property type="match status" value="1"/>
</dbReference>
<dbReference type="FunFam" id="3.80.30.20:FF:000001">
    <property type="entry name" value="tRNA-2-methylthio-N(6)-dimethylallyladenosine synthase 2"/>
    <property type="match status" value="1"/>
</dbReference>
<dbReference type="Gene3D" id="3.40.50.12160">
    <property type="entry name" value="Methylthiotransferase, N-terminal domain"/>
    <property type="match status" value="1"/>
</dbReference>
<dbReference type="Gene3D" id="3.80.30.20">
    <property type="entry name" value="tm_1862 like domain"/>
    <property type="match status" value="1"/>
</dbReference>
<dbReference type="HAMAP" id="MF_01864">
    <property type="entry name" value="tRNA_metthiotr_MiaB"/>
    <property type="match status" value="1"/>
</dbReference>
<dbReference type="InterPro" id="IPR006638">
    <property type="entry name" value="Elp3/MiaA/NifB-like_rSAM"/>
</dbReference>
<dbReference type="InterPro" id="IPR005839">
    <property type="entry name" value="Methylthiotransferase"/>
</dbReference>
<dbReference type="InterPro" id="IPR020612">
    <property type="entry name" value="Methylthiotransferase_CS"/>
</dbReference>
<dbReference type="InterPro" id="IPR013848">
    <property type="entry name" value="Methylthiotransferase_N"/>
</dbReference>
<dbReference type="InterPro" id="IPR038135">
    <property type="entry name" value="Methylthiotransferase_N_sf"/>
</dbReference>
<dbReference type="InterPro" id="IPR006463">
    <property type="entry name" value="MiaB_methiolase"/>
</dbReference>
<dbReference type="InterPro" id="IPR007197">
    <property type="entry name" value="rSAM"/>
</dbReference>
<dbReference type="InterPro" id="IPR023404">
    <property type="entry name" value="rSAM_horseshoe"/>
</dbReference>
<dbReference type="InterPro" id="IPR002792">
    <property type="entry name" value="TRAM_dom"/>
</dbReference>
<dbReference type="NCBIfam" id="TIGR01574">
    <property type="entry name" value="miaB-methiolase"/>
    <property type="match status" value="1"/>
</dbReference>
<dbReference type="NCBIfam" id="TIGR00089">
    <property type="entry name" value="MiaB/RimO family radical SAM methylthiotransferase"/>
    <property type="match status" value="1"/>
</dbReference>
<dbReference type="PANTHER" id="PTHR43020">
    <property type="entry name" value="CDK5 REGULATORY SUBUNIT-ASSOCIATED PROTEIN 1"/>
    <property type="match status" value="1"/>
</dbReference>
<dbReference type="PANTHER" id="PTHR43020:SF2">
    <property type="entry name" value="MITOCHONDRIAL TRNA METHYLTHIOTRANSFERASE CDK5RAP1"/>
    <property type="match status" value="1"/>
</dbReference>
<dbReference type="Pfam" id="PF04055">
    <property type="entry name" value="Radical_SAM"/>
    <property type="match status" value="1"/>
</dbReference>
<dbReference type="Pfam" id="PF01938">
    <property type="entry name" value="TRAM"/>
    <property type="match status" value="1"/>
</dbReference>
<dbReference type="Pfam" id="PF00919">
    <property type="entry name" value="UPF0004"/>
    <property type="match status" value="1"/>
</dbReference>
<dbReference type="SFLD" id="SFLDF00273">
    <property type="entry name" value="(dimethylallyl)adenosine_tRNA"/>
    <property type="match status" value="1"/>
</dbReference>
<dbReference type="SFLD" id="SFLDG01082">
    <property type="entry name" value="B12-binding_domain_containing"/>
    <property type="match status" value="1"/>
</dbReference>
<dbReference type="SFLD" id="SFLDS00029">
    <property type="entry name" value="Radical_SAM"/>
    <property type="match status" value="1"/>
</dbReference>
<dbReference type="SMART" id="SM00729">
    <property type="entry name" value="Elp3"/>
    <property type="match status" value="1"/>
</dbReference>
<dbReference type="SUPFAM" id="SSF102114">
    <property type="entry name" value="Radical SAM enzymes"/>
    <property type="match status" value="1"/>
</dbReference>
<dbReference type="PROSITE" id="PS51449">
    <property type="entry name" value="MTTASE_N"/>
    <property type="match status" value="1"/>
</dbReference>
<dbReference type="PROSITE" id="PS01278">
    <property type="entry name" value="MTTASE_RADICAL"/>
    <property type="match status" value="1"/>
</dbReference>
<dbReference type="PROSITE" id="PS51918">
    <property type="entry name" value="RADICAL_SAM"/>
    <property type="match status" value="1"/>
</dbReference>
<dbReference type="PROSITE" id="PS50926">
    <property type="entry name" value="TRAM"/>
    <property type="match status" value="1"/>
</dbReference>
<gene>
    <name evidence="1" type="primary">miaB</name>
    <name type="ordered locus">ECP_0684</name>
</gene>
<reference key="1">
    <citation type="journal article" date="2006" name="Mol. Microbiol.">
        <title>Role of pathogenicity island-associated integrases in the genome plasticity of uropathogenic Escherichia coli strain 536.</title>
        <authorList>
            <person name="Hochhut B."/>
            <person name="Wilde C."/>
            <person name="Balling G."/>
            <person name="Middendorf B."/>
            <person name="Dobrindt U."/>
            <person name="Brzuszkiewicz E."/>
            <person name="Gottschalk G."/>
            <person name="Carniel E."/>
            <person name="Hacker J."/>
        </authorList>
    </citation>
    <scope>NUCLEOTIDE SEQUENCE [LARGE SCALE GENOMIC DNA]</scope>
    <source>
        <strain>536 / UPEC</strain>
    </source>
</reference>
<organism>
    <name type="scientific">Escherichia coli O6:K15:H31 (strain 536 / UPEC)</name>
    <dbReference type="NCBI Taxonomy" id="362663"/>
    <lineage>
        <taxon>Bacteria</taxon>
        <taxon>Pseudomonadati</taxon>
        <taxon>Pseudomonadota</taxon>
        <taxon>Gammaproteobacteria</taxon>
        <taxon>Enterobacterales</taxon>
        <taxon>Enterobacteriaceae</taxon>
        <taxon>Escherichia</taxon>
    </lineage>
</organism>
<evidence type="ECO:0000255" key="1">
    <source>
        <dbReference type="HAMAP-Rule" id="MF_01864"/>
    </source>
</evidence>
<evidence type="ECO:0000255" key="2">
    <source>
        <dbReference type="PROSITE-ProRule" id="PRU01266"/>
    </source>
</evidence>
<accession>Q0TK19</accession>
<name>MIAB_ECOL5</name>
<sequence>MTKKLHIKTWGCQMNEYDSSKMADLLDATHGYQLTDVAEEADVLLLNTCSIREKAQEKVFHQLGRWKLLKEKNPDLIIGVGGCVASQEGEHIRQRAHYVDIIFGPQTLHRLPEMINSVRGDRSPVVDISFPEIEKFDRLPEPRAEGPTAFVSIMEGCNKYCTYCVVPYTRGEEVSRPSDDILFEIAQLAAQGVREVNLLGQNVNAWRGENYDGTTGSFADLLRLVAAIDGIDRIRFTTSHPIEFTDDIIEVYRDTPELVSFLHLPVQSGSDRILNLMGRTHTALEYKAIIRKLRAARPDIQISSDFIVGFPGETTEDFEKTMKLIADVNFDMSYSFIFSARPGTPAADMVDDVPEEEKKQRLYILQERINQQAMAWSRRMLGTTQRILVEGTSRKSIMELSGRTENNRVVNFEGTPDMIGKFVDVEITDVYPNSLRGKVVRTEDEMGLRVAETPESVIARTRKENDLGVGYYQP</sequence>
<protein>
    <recommendedName>
        <fullName evidence="1">tRNA-2-methylthio-N(6)-dimethylallyladenosine synthase</fullName>
        <ecNumber evidence="1">2.8.4.3</ecNumber>
    </recommendedName>
    <alternativeName>
        <fullName evidence="1">(Dimethylallyl)adenosine tRNA methylthiotransferase MiaB</fullName>
    </alternativeName>
    <alternativeName>
        <fullName evidence="1">tRNA-i(6)A37 methylthiotransferase</fullName>
    </alternativeName>
</protein>